<reference key="1">
    <citation type="journal article" date="2004" name="Genome Res.">
        <title>The status, quality, and expansion of the NIH full-length cDNA project: the Mammalian Gene Collection (MGC).</title>
        <authorList>
            <consortium name="The MGC Project Team"/>
        </authorList>
    </citation>
    <scope>NUCLEOTIDE SEQUENCE [LARGE SCALE MRNA]</scope>
    <source>
        <tissue>Testis</tissue>
    </source>
</reference>
<name>CNAS1_HUMAN</name>
<protein>
    <recommendedName>
        <fullName>Uncharacterized protein CSNK1G2-AS1</fullName>
    </recommendedName>
    <alternativeName>
        <fullName>CSNK1G2 antisense RNA 1</fullName>
    </alternativeName>
    <alternativeName>
        <fullName>CSNK1G2 antisense gene protein 1</fullName>
    </alternativeName>
</protein>
<proteinExistence type="evidence at transcript level"/>
<organism>
    <name type="scientific">Homo sapiens</name>
    <name type="common">Human</name>
    <dbReference type="NCBI Taxonomy" id="9606"/>
    <lineage>
        <taxon>Eukaryota</taxon>
        <taxon>Metazoa</taxon>
        <taxon>Chordata</taxon>
        <taxon>Craniata</taxon>
        <taxon>Vertebrata</taxon>
        <taxon>Euteleostomi</taxon>
        <taxon>Mammalia</taxon>
        <taxon>Eutheria</taxon>
        <taxon>Euarchontoglires</taxon>
        <taxon>Primates</taxon>
        <taxon>Haplorrhini</taxon>
        <taxon>Catarrhini</taxon>
        <taxon>Hominidae</taxon>
        <taxon>Homo</taxon>
    </lineage>
</organism>
<gene>
    <name type="primary">CSNK1G2-AS1</name>
    <name type="synonym">C19orf34</name>
</gene>
<accession>Q8NCQ2</accession>
<dbReference type="EMBL" id="BC029585">
    <property type="protein sequence ID" value="AAH29585.2"/>
    <property type="molecule type" value="mRNA"/>
</dbReference>
<dbReference type="IntAct" id="Q8NCQ2">
    <property type="interactions" value="1"/>
</dbReference>
<dbReference type="MINT" id="Q8NCQ2"/>
<dbReference type="ChEMBL" id="CHEMBL3351201"/>
<dbReference type="BioMuta" id="HGNC:28604"/>
<dbReference type="TopDownProteomics" id="Q8NCQ2"/>
<dbReference type="AGR" id="HGNC:28604"/>
<dbReference type="GeneCards" id="CSNK1G2-AS1"/>
<dbReference type="HGNC" id="HGNC:28604">
    <property type="gene designation" value="CSNK1G2-AS1"/>
</dbReference>
<dbReference type="neXtProt" id="NX_Q8NCQ2"/>
<dbReference type="InParanoid" id="Q8NCQ2"/>
<dbReference type="PAN-GO" id="Q8NCQ2">
    <property type="GO annotations" value="0 GO annotations based on evolutionary models"/>
</dbReference>
<dbReference type="PathwayCommons" id="Q8NCQ2"/>
<dbReference type="Pharos" id="Q8NCQ2">
    <property type="development level" value="Tdark"/>
</dbReference>
<dbReference type="PRO" id="PR:Q8NCQ2"/>
<dbReference type="Proteomes" id="UP000005640">
    <property type="component" value="Unplaced"/>
</dbReference>
<dbReference type="RNAct" id="Q8NCQ2">
    <property type="molecule type" value="protein"/>
</dbReference>
<sequence length="148" mass="16070">MGRAGPRSTADTRPRATVITTRRPRPWQKPTSPRRLHRRRPRGQPASENAAEPSQVAISKGKSPDYANGGKAAMDSRASDAINKSKVDTSASNPSQRRPSRLRGKRSLALPPRLECLFPSSCGSRRATSRPGFPPLEGSHLGCQLLPL</sequence>
<feature type="chain" id="PRO_0000079386" description="Uncharacterized protein CSNK1G2-AS1">
    <location>
        <begin position="1"/>
        <end position="148"/>
    </location>
</feature>
<feature type="region of interest" description="Disordered" evidence="1">
    <location>
        <begin position="1"/>
        <end position="108"/>
    </location>
</feature>
<feature type="compositionally biased region" description="Basic residues" evidence="1">
    <location>
        <begin position="22"/>
        <end position="42"/>
    </location>
</feature>
<feature type="compositionally biased region" description="Polar residues" evidence="1">
    <location>
        <begin position="88"/>
        <end position="97"/>
    </location>
</feature>
<evidence type="ECO:0000256" key="1">
    <source>
        <dbReference type="SAM" id="MobiDB-lite"/>
    </source>
</evidence>
<keyword id="KW-1185">Reference proteome</keyword>